<evidence type="ECO:0000255" key="1">
    <source>
        <dbReference type="HAMAP-Rule" id="MF_01558"/>
    </source>
</evidence>
<evidence type="ECO:0000255" key="2">
    <source>
        <dbReference type="PROSITE-ProRule" id="PRU01083"/>
    </source>
</evidence>
<reference key="1">
    <citation type="journal article" date="2005" name="Science">
        <title>Life at depth: Photobacterium profundum genome sequence and expression analysis.</title>
        <authorList>
            <person name="Vezzi A."/>
            <person name="Campanaro S."/>
            <person name="D'Angelo M."/>
            <person name="Simonato F."/>
            <person name="Vitulo N."/>
            <person name="Lauro F.M."/>
            <person name="Cestaro A."/>
            <person name="Malacrida G."/>
            <person name="Simionati B."/>
            <person name="Cannata N."/>
            <person name="Romualdi C."/>
            <person name="Bartlett D.H."/>
            <person name="Valle G."/>
        </authorList>
    </citation>
    <scope>NUCLEOTIDE SEQUENCE [LARGE SCALE GENOMIC DNA]</scope>
    <source>
        <strain>ATCC BAA-1253 / SS9</strain>
    </source>
</reference>
<keyword id="KW-0378">Hydrolase</keyword>
<keyword id="KW-0479">Metal-binding</keyword>
<keyword id="KW-1185">Reference proteome</keyword>
<keyword id="KW-0862">Zinc</keyword>
<gene>
    <name evidence="1" type="primary">cdd</name>
    <name type="ordered locus">PBPRA1689</name>
</gene>
<protein>
    <recommendedName>
        <fullName evidence="1">Cytidine deaminase</fullName>
        <ecNumber evidence="1">3.5.4.5</ecNumber>
    </recommendedName>
    <alternativeName>
        <fullName evidence="1">Cytidine aminohydrolase</fullName>
        <shortName evidence="1">CDA</shortName>
    </alternativeName>
</protein>
<organism>
    <name type="scientific">Photobacterium profundum (strain SS9)</name>
    <dbReference type="NCBI Taxonomy" id="298386"/>
    <lineage>
        <taxon>Bacteria</taxon>
        <taxon>Pseudomonadati</taxon>
        <taxon>Pseudomonadota</taxon>
        <taxon>Gammaproteobacteria</taxon>
        <taxon>Vibrionales</taxon>
        <taxon>Vibrionaceae</taxon>
        <taxon>Photobacterium</taxon>
    </lineage>
</organism>
<accession>Q6LRI0</accession>
<name>CDD_PHOPR</name>
<dbReference type="EC" id="3.5.4.5" evidence="1"/>
<dbReference type="EMBL" id="CR378668">
    <property type="protein sequence ID" value="CAG20096.1"/>
    <property type="molecule type" value="Genomic_DNA"/>
</dbReference>
<dbReference type="RefSeq" id="WP_011218408.1">
    <property type="nucleotide sequence ID" value="NC_006370.1"/>
</dbReference>
<dbReference type="SMR" id="Q6LRI0"/>
<dbReference type="STRING" id="298386.PBPRA1689"/>
<dbReference type="KEGG" id="ppr:PBPRA1689"/>
<dbReference type="eggNOG" id="COG0295">
    <property type="taxonomic scope" value="Bacteria"/>
</dbReference>
<dbReference type="HOGENOM" id="CLU_052424_0_0_6"/>
<dbReference type="Proteomes" id="UP000000593">
    <property type="component" value="Chromosome 1"/>
</dbReference>
<dbReference type="GO" id="GO:0005829">
    <property type="term" value="C:cytosol"/>
    <property type="evidence" value="ECO:0007669"/>
    <property type="project" value="TreeGrafter"/>
</dbReference>
<dbReference type="GO" id="GO:0004126">
    <property type="term" value="F:cytidine deaminase activity"/>
    <property type="evidence" value="ECO:0007669"/>
    <property type="project" value="UniProtKB-UniRule"/>
</dbReference>
<dbReference type="GO" id="GO:0042802">
    <property type="term" value="F:identical protein binding"/>
    <property type="evidence" value="ECO:0007669"/>
    <property type="project" value="UniProtKB-ARBA"/>
</dbReference>
<dbReference type="GO" id="GO:0008270">
    <property type="term" value="F:zinc ion binding"/>
    <property type="evidence" value="ECO:0007669"/>
    <property type="project" value="UniProtKB-UniRule"/>
</dbReference>
<dbReference type="GO" id="GO:0009972">
    <property type="term" value="P:cytidine deamination"/>
    <property type="evidence" value="ECO:0007669"/>
    <property type="project" value="InterPro"/>
</dbReference>
<dbReference type="CDD" id="cd01283">
    <property type="entry name" value="cytidine_deaminase"/>
    <property type="match status" value="2"/>
</dbReference>
<dbReference type="FunFam" id="3.40.140.10:FF:000007">
    <property type="entry name" value="Cytidine deaminase"/>
    <property type="match status" value="1"/>
</dbReference>
<dbReference type="Gene3D" id="3.40.140.10">
    <property type="entry name" value="Cytidine Deaminase, domain 2"/>
    <property type="match status" value="2"/>
</dbReference>
<dbReference type="HAMAP" id="MF_01558">
    <property type="entry name" value="Cyt_deam"/>
    <property type="match status" value="1"/>
</dbReference>
<dbReference type="InterPro" id="IPR016192">
    <property type="entry name" value="APOBEC/CMP_deaminase_Zn-bd"/>
</dbReference>
<dbReference type="InterPro" id="IPR002125">
    <property type="entry name" value="CMP_dCMP_dom"/>
</dbReference>
<dbReference type="InterPro" id="IPR013171">
    <property type="entry name" value="Cyd/dCyd_deaminase_Zn-bd"/>
</dbReference>
<dbReference type="InterPro" id="IPR050202">
    <property type="entry name" value="Cyt/Deoxycyt_deaminase"/>
</dbReference>
<dbReference type="InterPro" id="IPR006263">
    <property type="entry name" value="Cyt_deam_dimer"/>
</dbReference>
<dbReference type="InterPro" id="IPR016193">
    <property type="entry name" value="Cytidine_deaminase-like"/>
</dbReference>
<dbReference type="InterPro" id="IPR020797">
    <property type="entry name" value="Cytidine_deaminase_bacteria"/>
</dbReference>
<dbReference type="NCBIfam" id="TIGR01355">
    <property type="entry name" value="cyt_deam_dimer"/>
    <property type="match status" value="1"/>
</dbReference>
<dbReference type="NCBIfam" id="NF006537">
    <property type="entry name" value="PRK09027.1"/>
    <property type="match status" value="1"/>
</dbReference>
<dbReference type="PANTHER" id="PTHR11644">
    <property type="entry name" value="CYTIDINE DEAMINASE"/>
    <property type="match status" value="1"/>
</dbReference>
<dbReference type="PANTHER" id="PTHR11644:SF2">
    <property type="entry name" value="CYTIDINE DEAMINASE"/>
    <property type="match status" value="1"/>
</dbReference>
<dbReference type="Pfam" id="PF00383">
    <property type="entry name" value="dCMP_cyt_deam_1"/>
    <property type="match status" value="1"/>
</dbReference>
<dbReference type="Pfam" id="PF08211">
    <property type="entry name" value="dCMP_cyt_deam_2"/>
    <property type="match status" value="1"/>
</dbReference>
<dbReference type="PIRSF" id="PIRSF006334">
    <property type="entry name" value="Cdd_plus_pseudo"/>
    <property type="match status" value="1"/>
</dbReference>
<dbReference type="SUPFAM" id="SSF53927">
    <property type="entry name" value="Cytidine deaminase-like"/>
    <property type="match status" value="2"/>
</dbReference>
<dbReference type="PROSITE" id="PS00903">
    <property type="entry name" value="CYT_DCMP_DEAMINASES_1"/>
    <property type="match status" value="1"/>
</dbReference>
<dbReference type="PROSITE" id="PS51747">
    <property type="entry name" value="CYT_DCMP_DEAMINASES_2"/>
    <property type="match status" value="2"/>
</dbReference>
<sequence>MHAKIMDALGSLPSDLASAVKPIFEDANFDATLSPEQFTTLLSTTHMTDSELRVALLPIAAAYSVAPISKFFVGAIVRGESGRLYFGANMEFVGASLSQTIHAEQSAISHAWIKGETGITDITINYSPCGHCRQFMNELTTAKTLIVQLPEREEQTLQQYLPESFGPADLNITDALLGKIDHGMTIKETDEFVAIACKAANGSHAPYTKNYSGVALKATDGKVFTGKYAENAAFNPSLPPLQVALVNMNMAGYALTEIAEAALVEKADSTISHLSDTQTTLEALNPDIPLTYVAA</sequence>
<feature type="chain" id="PRO_0000171657" description="Cytidine deaminase">
    <location>
        <begin position="1"/>
        <end position="295"/>
    </location>
</feature>
<feature type="domain" description="CMP/dCMP-type deaminase 1" evidence="2">
    <location>
        <begin position="48"/>
        <end position="168"/>
    </location>
</feature>
<feature type="domain" description="CMP/dCMP-type deaminase 2" evidence="2">
    <location>
        <begin position="187"/>
        <end position="295"/>
    </location>
</feature>
<feature type="active site" description="Proton donor" evidence="1">
    <location>
        <position position="104"/>
    </location>
</feature>
<feature type="binding site" evidence="1">
    <location>
        <begin position="89"/>
        <end position="91"/>
    </location>
    <ligand>
        <name>substrate</name>
    </ligand>
</feature>
<feature type="binding site" evidence="1">
    <location>
        <position position="102"/>
    </location>
    <ligand>
        <name>Zn(2+)</name>
        <dbReference type="ChEBI" id="CHEBI:29105"/>
        <note>catalytic</note>
    </ligand>
</feature>
<feature type="binding site" evidence="1">
    <location>
        <position position="129"/>
    </location>
    <ligand>
        <name>Zn(2+)</name>
        <dbReference type="ChEBI" id="CHEBI:29105"/>
        <note>catalytic</note>
    </ligand>
</feature>
<feature type="binding site" evidence="1">
    <location>
        <position position="132"/>
    </location>
    <ligand>
        <name>Zn(2+)</name>
        <dbReference type="ChEBI" id="CHEBI:29105"/>
        <note>catalytic</note>
    </ligand>
</feature>
<comment type="function">
    <text evidence="1">This enzyme scavenges exogenous and endogenous cytidine and 2'-deoxycytidine for UMP synthesis.</text>
</comment>
<comment type="catalytic activity">
    <reaction evidence="1">
        <text>cytidine + H2O + H(+) = uridine + NH4(+)</text>
        <dbReference type="Rhea" id="RHEA:16069"/>
        <dbReference type="ChEBI" id="CHEBI:15377"/>
        <dbReference type="ChEBI" id="CHEBI:15378"/>
        <dbReference type="ChEBI" id="CHEBI:16704"/>
        <dbReference type="ChEBI" id="CHEBI:17562"/>
        <dbReference type="ChEBI" id="CHEBI:28938"/>
        <dbReference type="EC" id="3.5.4.5"/>
    </reaction>
</comment>
<comment type="catalytic activity">
    <reaction evidence="1">
        <text>2'-deoxycytidine + H2O + H(+) = 2'-deoxyuridine + NH4(+)</text>
        <dbReference type="Rhea" id="RHEA:13433"/>
        <dbReference type="ChEBI" id="CHEBI:15377"/>
        <dbReference type="ChEBI" id="CHEBI:15378"/>
        <dbReference type="ChEBI" id="CHEBI:15698"/>
        <dbReference type="ChEBI" id="CHEBI:16450"/>
        <dbReference type="ChEBI" id="CHEBI:28938"/>
        <dbReference type="EC" id="3.5.4.5"/>
    </reaction>
</comment>
<comment type="cofactor">
    <cofactor evidence="1">
        <name>Zn(2+)</name>
        <dbReference type="ChEBI" id="CHEBI:29105"/>
    </cofactor>
    <text evidence="1">Binds 1 zinc ion.</text>
</comment>
<comment type="subunit">
    <text evidence="1">Homodimer.</text>
</comment>
<comment type="similarity">
    <text evidence="1">Belongs to the cytidine and deoxycytidylate deaminase family.</text>
</comment>
<proteinExistence type="inferred from homology"/>